<dbReference type="EMBL" id="DQ630521">
    <property type="protein sequence ID" value="ABF60180.1"/>
    <property type="molecule type" value="Genomic_DNA"/>
</dbReference>
<dbReference type="RefSeq" id="YP_764440.1">
    <property type="nucleotide sequence ID" value="NC_008372.1"/>
</dbReference>
<dbReference type="SMR" id="Q06SC6"/>
<dbReference type="GeneID" id="4308360"/>
<dbReference type="GO" id="GO:0009535">
    <property type="term" value="C:chloroplast thylakoid membrane"/>
    <property type="evidence" value="ECO:0007669"/>
    <property type="project" value="UniProtKB-SubCell"/>
</dbReference>
<dbReference type="GO" id="GO:0009539">
    <property type="term" value="C:photosystem II reaction center"/>
    <property type="evidence" value="ECO:0007669"/>
    <property type="project" value="InterPro"/>
</dbReference>
<dbReference type="GO" id="GO:0015979">
    <property type="term" value="P:photosynthesis"/>
    <property type="evidence" value="ECO:0007669"/>
    <property type="project" value="UniProtKB-UniRule"/>
</dbReference>
<dbReference type="GO" id="GO:0042549">
    <property type="term" value="P:photosystem II stabilization"/>
    <property type="evidence" value="ECO:0007669"/>
    <property type="project" value="InterPro"/>
</dbReference>
<dbReference type="Gene3D" id="1.10.287.740">
    <property type="entry name" value="Photosystem II PsbZ, reaction centre"/>
    <property type="match status" value="1"/>
</dbReference>
<dbReference type="HAMAP" id="MF_00644">
    <property type="entry name" value="PSII_PsbZ"/>
    <property type="match status" value="1"/>
</dbReference>
<dbReference type="InterPro" id="IPR002644">
    <property type="entry name" value="PSII_PsbZ"/>
</dbReference>
<dbReference type="InterPro" id="IPR036512">
    <property type="entry name" value="PSII_PsbZ_sf"/>
</dbReference>
<dbReference type="NCBIfam" id="TIGR03043">
    <property type="entry name" value="PS_II_psbZ"/>
    <property type="match status" value="1"/>
</dbReference>
<dbReference type="PANTHER" id="PTHR34971">
    <property type="entry name" value="PHOTOSYSTEM II REACTION CENTER PROTEIN Z"/>
    <property type="match status" value="1"/>
</dbReference>
<dbReference type="PANTHER" id="PTHR34971:SF2">
    <property type="entry name" value="PHOTOSYSTEM II REACTION CENTER PROTEIN Z"/>
    <property type="match status" value="1"/>
</dbReference>
<dbReference type="Pfam" id="PF01737">
    <property type="entry name" value="Ycf9"/>
    <property type="match status" value="1"/>
</dbReference>
<dbReference type="SUPFAM" id="SSF161055">
    <property type="entry name" value="PsbZ-like"/>
    <property type="match status" value="1"/>
</dbReference>
<geneLocation type="chloroplast"/>
<proteinExistence type="inferred from homology"/>
<keyword id="KW-0150">Chloroplast</keyword>
<keyword id="KW-0472">Membrane</keyword>
<keyword id="KW-0602">Photosynthesis</keyword>
<keyword id="KW-0604">Photosystem II</keyword>
<keyword id="KW-0934">Plastid</keyword>
<keyword id="KW-0674">Reaction center</keyword>
<keyword id="KW-0793">Thylakoid</keyword>
<keyword id="KW-0812">Transmembrane</keyword>
<keyword id="KW-1133">Transmembrane helix</keyword>
<accession>Q06SC6</accession>
<comment type="function">
    <text evidence="1">May control the interaction of photosystem II (PSII) cores with the light-harvesting antenna, regulates electron flow through the 2 photosystem reaction centers. PSII is a light-driven water plastoquinone oxidoreductase, using light energy to abstract electrons from H(2)O, generating a proton gradient subsequently used for ATP formation.</text>
</comment>
<comment type="subunit">
    <text evidence="1">PSII is composed of 1 copy each of membrane proteins PsbA, PsbB, PsbC, PsbD, PsbE, PsbF, PsbH, PsbI, PsbJ, PsbK, PsbL, PsbM, PsbT, PsbY, PsbZ, Psb30/Ycf12, at least 3 peripheral proteins of the oxygen-evolving complex and a large number of cofactors. It forms dimeric complexes.</text>
</comment>
<comment type="subcellular location">
    <subcellularLocation>
        <location evidence="1">Plastid</location>
        <location evidence="1">Chloroplast thylakoid membrane</location>
        <topology evidence="1">Multi-pass membrane protein</topology>
    </subcellularLocation>
</comment>
<comment type="similarity">
    <text evidence="1">Belongs to the PsbZ family.</text>
</comment>
<sequence>MTSIFQLTLFALILFSFVLVVGVPVVFALPNGWTENKRIVLSGLGLWILLVFVVGILNSFVV</sequence>
<organism>
    <name type="scientific">Stigeoclonium helveticum</name>
    <name type="common">Green alga</name>
    <dbReference type="NCBI Taxonomy" id="55999"/>
    <lineage>
        <taxon>Eukaryota</taxon>
        <taxon>Viridiplantae</taxon>
        <taxon>Chlorophyta</taxon>
        <taxon>core chlorophytes</taxon>
        <taxon>Chlorophyceae</taxon>
        <taxon>OCC clade</taxon>
        <taxon>Chaetophorales</taxon>
        <taxon>Chaetophoraceae</taxon>
        <taxon>Stigeoclonium</taxon>
    </lineage>
</organism>
<reference key="1">
    <citation type="journal article" date="2006" name="Mol. Genet. Genomics">
        <title>Distinctive architecture of the chloroplast genome in the chlorophycean green alga Stigeoclonium helveticum.</title>
        <authorList>
            <person name="Belanger A.-S."/>
            <person name="Brouard J.-S."/>
            <person name="Charlebois P."/>
            <person name="Otis C."/>
            <person name="Lemieux C."/>
            <person name="Turmel M."/>
        </authorList>
    </citation>
    <scope>NUCLEOTIDE SEQUENCE [LARGE SCALE GENOMIC DNA]</scope>
    <source>
        <strain>UTEX 441</strain>
    </source>
</reference>
<evidence type="ECO:0000255" key="1">
    <source>
        <dbReference type="HAMAP-Rule" id="MF_00644"/>
    </source>
</evidence>
<name>PSBZ_STIHE</name>
<protein>
    <recommendedName>
        <fullName evidence="1">Photosystem II reaction center protein Z</fullName>
        <shortName evidence="1">PSII-Z</shortName>
    </recommendedName>
</protein>
<gene>
    <name evidence="1" type="primary">psbZ</name>
</gene>
<feature type="chain" id="PRO_0000277240" description="Photosystem II reaction center protein Z">
    <location>
        <begin position="1"/>
        <end position="62"/>
    </location>
</feature>
<feature type="transmembrane region" description="Helical" evidence="1">
    <location>
        <begin position="8"/>
        <end position="28"/>
    </location>
</feature>
<feature type="transmembrane region" description="Helical" evidence="1">
    <location>
        <begin position="41"/>
        <end position="61"/>
    </location>
</feature>